<proteinExistence type="evidence at protein level"/>
<comment type="function">
    <text evidence="2">Bifunctional enzyme which acts both as a sphingolipid delta(4)-desaturase and a sphingolipid C4-monooxygenase.</text>
</comment>
<comment type="catalytic activity">
    <reaction evidence="2">
        <text>a dihydroceramide + 2 Fe(II)-[cytochrome b5] + O2 + 2 H(+) = a phytoceramide + 2 Fe(III)-[cytochrome b5] + H2O</text>
        <dbReference type="Rhea" id="RHEA:55808"/>
        <dbReference type="Rhea" id="RHEA-COMP:10438"/>
        <dbReference type="Rhea" id="RHEA-COMP:10439"/>
        <dbReference type="ChEBI" id="CHEBI:15377"/>
        <dbReference type="ChEBI" id="CHEBI:15378"/>
        <dbReference type="ChEBI" id="CHEBI:15379"/>
        <dbReference type="ChEBI" id="CHEBI:29033"/>
        <dbReference type="ChEBI" id="CHEBI:29034"/>
        <dbReference type="ChEBI" id="CHEBI:139048"/>
        <dbReference type="ChEBI" id="CHEBI:139051"/>
        <dbReference type="EC" id="1.14.18.5"/>
    </reaction>
</comment>
<comment type="catalytic activity">
    <reaction evidence="2">
        <text>an N-acylsphinganine + 2 Fe(II)-[cytochrome b5] + O2 + 2 H(+) = an N-acylsphing-4-enine + 2 Fe(III)-[cytochrome b5] + 2 H2O</text>
        <dbReference type="Rhea" id="RHEA:46544"/>
        <dbReference type="Rhea" id="RHEA-COMP:10438"/>
        <dbReference type="Rhea" id="RHEA-COMP:10439"/>
        <dbReference type="ChEBI" id="CHEBI:15377"/>
        <dbReference type="ChEBI" id="CHEBI:15378"/>
        <dbReference type="ChEBI" id="CHEBI:15379"/>
        <dbReference type="ChEBI" id="CHEBI:29033"/>
        <dbReference type="ChEBI" id="CHEBI:29034"/>
        <dbReference type="ChEBI" id="CHEBI:31488"/>
        <dbReference type="ChEBI" id="CHEBI:52639"/>
        <dbReference type="EC" id="1.14.19.17"/>
    </reaction>
</comment>
<comment type="catalytic activity">
    <reaction evidence="1">
        <text>N-octanoylsphinganine + 2 Fe(II)-[cytochrome b5] + O2 + 2 H(+) = N-octanoyl-4-hydroxysphinganine + 2 Fe(III)-[cytochrome b5] + H2O</text>
        <dbReference type="Rhea" id="RHEA:43116"/>
        <dbReference type="Rhea" id="RHEA-COMP:10438"/>
        <dbReference type="Rhea" id="RHEA-COMP:10439"/>
        <dbReference type="ChEBI" id="CHEBI:15377"/>
        <dbReference type="ChEBI" id="CHEBI:15378"/>
        <dbReference type="ChEBI" id="CHEBI:15379"/>
        <dbReference type="ChEBI" id="CHEBI:29033"/>
        <dbReference type="ChEBI" id="CHEBI:29034"/>
        <dbReference type="ChEBI" id="CHEBI:82841"/>
        <dbReference type="ChEBI" id="CHEBI:82842"/>
    </reaction>
    <physiologicalReaction direction="left-to-right" evidence="1">
        <dbReference type="Rhea" id="RHEA:43117"/>
    </physiologicalReaction>
</comment>
<comment type="catalytic activity">
    <reaction evidence="1">
        <text>an N-acylsphinganine + 2 Fe(II)-[cytochrome b5] + O2 + 2 H(+) = an N-acyl-(4R)-4-hydroxysphinganine + 2 Fe(III)-[cytochrome b5] + H2O</text>
        <dbReference type="Rhea" id="RHEA:46364"/>
        <dbReference type="Rhea" id="RHEA-COMP:10438"/>
        <dbReference type="Rhea" id="RHEA-COMP:10439"/>
        <dbReference type="ChEBI" id="CHEBI:15377"/>
        <dbReference type="ChEBI" id="CHEBI:15378"/>
        <dbReference type="ChEBI" id="CHEBI:15379"/>
        <dbReference type="ChEBI" id="CHEBI:29033"/>
        <dbReference type="ChEBI" id="CHEBI:29034"/>
        <dbReference type="ChEBI" id="CHEBI:31488"/>
        <dbReference type="ChEBI" id="CHEBI:31998"/>
        <dbReference type="EC" id="1.14.18.5"/>
    </reaction>
    <physiologicalReaction direction="left-to-right" evidence="1">
        <dbReference type="Rhea" id="RHEA:46365"/>
    </physiologicalReaction>
</comment>
<comment type="pathway">
    <text>Membrane lipid metabolism; sphingolipid biosynthesis.</text>
</comment>
<comment type="subcellular location">
    <subcellularLocation>
        <location evidence="2">Endoplasmic reticulum membrane</location>
        <topology evidence="2">Multi-pass membrane protein</topology>
    </subcellularLocation>
</comment>
<comment type="similarity">
    <text evidence="5">Belongs to the fatty acid desaturase type 1 family. DEGS subfamily.</text>
</comment>
<accession>Q564G3</accession>
<reference key="1">
    <citation type="journal article" date="2007" name="Biochimie">
        <title>Myristic acid increases the activity of dihydroceramide delta4-desaturase 1 through its N-terminal myristoylation.</title>
        <authorList>
            <person name="Beauchamp E."/>
            <person name="Goenaga D."/>
            <person name="Le Bloc'h J."/>
            <person name="Catheline D."/>
            <person name="Legrand P."/>
            <person name="Rioux V."/>
        </authorList>
    </citation>
    <scope>NUCLEOTIDE SEQUENCE [MRNA]</scope>
    <scope>MYRISTOYLATION AT GLY-2</scope>
    <source>
        <strain evidence="7">Sprague-Dawley</strain>
        <tissue evidence="4">Liver</tissue>
    </source>
</reference>
<reference key="2">
    <citation type="journal article" date="2004" name="Genome Res.">
        <title>The status, quality, and expansion of the NIH full-length cDNA project: the Mammalian Gene Collection (MGC).</title>
        <authorList>
            <consortium name="The MGC Project Team"/>
        </authorList>
    </citation>
    <scope>NUCLEOTIDE SEQUENCE [LARGE SCALE MRNA]</scope>
    <source>
        <tissue evidence="6">Thymus</tissue>
    </source>
</reference>
<evidence type="ECO:0000250" key="1">
    <source>
        <dbReference type="UniProtKB" id="Q6QHC5"/>
    </source>
</evidence>
<evidence type="ECO:0000250" key="2">
    <source>
        <dbReference type="UniProtKB" id="Q8R2F2"/>
    </source>
</evidence>
<evidence type="ECO:0000255" key="3"/>
<evidence type="ECO:0000269" key="4">
    <source>
    </source>
</evidence>
<evidence type="ECO:0000305" key="5"/>
<evidence type="ECO:0000312" key="6">
    <source>
        <dbReference type="EMBL" id="AAH98701.1"/>
    </source>
</evidence>
<evidence type="ECO:0000312" key="7">
    <source>
        <dbReference type="EMBL" id="CAI79417.1"/>
    </source>
</evidence>
<organism>
    <name type="scientific">Rattus norvegicus</name>
    <name type="common">Rat</name>
    <dbReference type="NCBI Taxonomy" id="10116"/>
    <lineage>
        <taxon>Eukaryota</taxon>
        <taxon>Metazoa</taxon>
        <taxon>Chordata</taxon>
        <taxon>Craniata</taxon>
        <taxon>Vertebrata</taxon>
        <taxon>Euteleostomi</taxon>
        <taxon>Mammalia</taxon>
        <taxon>Eutheria</taxon>
        <taxon>Euarchontoglires</taxon>
        <taxon>Glires</taxon>
        <taxon>Rodentia</taxon>
        <taxon>Myomorpha</taxon>
        <taxon>Muroidea</taxon>
        <taxon>Muridae</taxon>
        <taxon>Murinae</taxon>
        <taxon>Rattus</taxon>
    </lineage>
</organism>
<protein>
    <recommendedName>
        <fullName>Sphingolipid delta(4)-desaturase/C4-monooxygenase DES2</fullName>
        <ecNumber>1.14.18.5</ecNumber>
        <ecNumber>1.14.19.17</ecNumber>
    </recommendedName>
    <alternativeName>
        <fullName>Degenerative spermatocyte homolog 2</fullName>
    </alternativeName>
    <alternativeName>
        <fullName>Sphingolipid 4-desaturase</fullName>
    </alternativeName>
    <alternativeName>
        <fullName>Sphingolipid C4-monooxygenase</fullName>
    </alternativeName>
</protein>
<feature type="initiator methionine" description="Removed" evidence="4">
    <location>
        <position position="1"/>
    </location>
</feature>
<feature type="chain" id="PRO_0000312818" description="Sphingolipid delta(4)-desaturase/C4-monooxygenase DES2" evidence="4">
    <location>
        <begin position="2"/>
        <end position="323"/>
    </location>
</feature>
<feature type="transmembrane region" description="Helical" evidence="3">
    <location>
        <begin position="41"/>
        <end position="61"/>
    </location>
</feature>
<feature type="transmembrane region" description="Helical" evidence="3">
    <location>
        <begin position="68"/>
        <end position="88"/>
    </location>
</feature>
<feature type="transmembrane region" description="Helical" evidence="3">
    <location>
        <begin position="200"/>
        <end position="220"/>
    </location>
</feature>
<feature type="region of interest" description="Required for C4-hydroxylase activity" evidence="2">
    <location>
        <begin position="95"/>
        <end position="99"/>
    </location>
</feature>
<feature type="short sequence motif" description="Histidine box-1" evidence="5">
    <location>
        <begin position="89"/>
        <end position="93"/>
    </location>
</feature>
<feature type="short sequence motif" description="Histidine box-2" evidence="5">
    <location>
        <begin position="128"/>
        <end position="132"/>
    </location>
</feature>
<feature type="short sequence motif" description="Histidine box-3" evidence="5">
    <location>
        <begin position="259"/>
        <end position="263"/>
    </location>
</feature>
<feature type="lipid moiety-binding region" description="N-myristoyl glycine" evidence="4">
    <location>
        <position position="2"/>
    </location>
</feature>
<dbReference type="EC" id="1.14.18.5"/>
<dbReference type="EC" id="1.14.19.17"/>
<dbReference type="EMBL" id="AJ938082">
    <property type="protein sequence ID" value="CAI79417.1"/>
    <property type="molecule type" value="mRNA"/>
</dbReference>
<dbReference type="EMBL" id="BC098701">
    <property type="protein sequence ID" value="AAH98701.1"/>
    <property type="molecule type" value="mRNA"/>
</dbReference>
<dbReference type="RefSeq" id="NP_001017457.1">
    <property type="nucleotide sequence ID" value="NM_001017457.2"/>
</dbReference>
<dbReference type="FunCoup" id="Q564G3">
    <property type="interactions" value="229"/>
</dbReference>
<dbReference type="STRING" id="10116.ENSRNOP00000015855"/>
<dbReference type="iPTMnet" id="Q564G3"/>
<dbReference type="PhosphoSitePlus" id="Q564G3"/>
<dbReference type="PaxDb" id="10116-ENSRNOP00000015855"/>
<dbReference type="Ensembl" id="ENSRNOT00000015855.7">
    <property type="protein sequence ID" value="ENSRNOP00000015855.4"/>
    <property type="gene ID" value="ENSRNOG00000011716.7"/>
</dbReference>
<dbReference type="GeneID" id="314438"/>
<dbReference type="KEGG" id="rno:314438"/>
<dbReference type="UCSC" id="RGD:1305023">
    <property type="organism name" value="rat"/>
</dbReference>
<dbReference type="AGR" id="RGD:1305023"/>
<dbReference type="CTD" id="123099"/>
<dbReference type="RGD" id="1305023">
    <property type="gene designation" value="Degs2"/>
</dbReference>
<dbReference type="eggNOG" id="KOG2987">
    <property type="taxonomic scope" value="Eukaryota"/>
</dbReference>
<dbReference type="GeneTree" id="ENSGT00390000013448"/>
<dbReference type="HOGENOM" id="CLU_032156_0_0_1"/>
<dbReference type="InParanoid" id="Q564G3"/>
<dbReference type="OMA" id="FEGWLFC"/>
<dbReference type="OrthoDB" id="200948at2759"/>
<dbReference type="PhylomeDB" id="Q564G3"/>
<dbReference type="TreeFam" id="TF313582"/>
<dbReference type="BRENDA" id="1.14.19.17">
    <property type="organism ID" value="5301"/>
</dbReference>
<dbReference type="Reactome" id="R-RNO-1660661">
    <property type="pathway name" value="Sphingolipid de novo biosynthesis"/>
</dbReference>
<dbReference type="SABIO-RK" id="Q564G3"/>
<dbReference type="UniPathway" id="UPA00786"/>
<dbReference type="PRO" id="PR:Q564G3"/>
<dbReference type="Proteomes" id="UP000002494">
    <property type="component" value="Chromosome 6"/>
</dbReference>
<dbReference type="Bgee" id="ENSRNOG00000011716">
    <property type="expression patterns" value="Expressed in duodenum and 18 other cell types or tissues"/>
</dbReference>
<dbReference type="GO" id="GO:0005789">
    <property type="term" value="C:endoplasmic reticulum membrane"/>
    <property type="evidence" value="ECO:0007669"/>
    <property type="project" value="UniProtKB-SubCell"/>
</dbReference>
<dbReference type="GO" id="GO:0102772">
    <property type="term" value="F:sphingolipid C4-monooxygenase activity"/>
    <property type="evidence" value="ECO:0007669"/>
    <property type="project" value="UniProtKB-EC"/>
</dbReference>
<dbReference type="GO" id="GO:0042284">
    <property type="term" value="F:sphingolipid delta-4 desaturase activity"/>
    <property type="evidence" value="ECO:0000266"/>
    <property type="project" value="RGD"/>
</dbReference>
<dbReference type="GO" id="GO:0046513">
    <property type="term" value="P:ceramide biosynthetic process"/>
    <property type="evidence" value="ECO:0000318"/>
    <property type="project" value="GO_Central"/>
</dbReference>
<dbReference type="GO" id="GO:0006667">
    <property type="term" value="P:sphinganine metabolic process"/>
    <property type="evidence" value="ECO:0000266"/>
    <property type="project" value="RGD"/>
</dbReference>
<dbReference type="GO" id="GO:0030148">
    <property type="term" value="P:sphingolipid biosynthetic process"/>
    <property type="evidence" value="ECO:0000266"/>
    <property type="project" value="RGD"/>
</dbReference>
<dbReference type="CDD" id="cd03508">
    <property type="entry name" value="Delta4-sphingolipid-FADS-like"/>
    <property type="match status" value="1"/>
</dbReference>
<dbReference type="InterPro" id="IPR011388">
    <property type="entry name" value="DES1/DES2"/>
</dbReference>
<dbReference type="InterPro" id="IPR005804">
    <property type="entry name" value="FA_desaturase_dom"/>
</dbReference>
<dbReference type="InterPro" id="IPR013866">
    <property type="entry name" value="Sphingolipid_d4-desaturase_N"/>
</dbReference>
<dbReference type="PANTHER" id="PTHR12879">
    <property type="entry name" value="SPHINGOLIPID DELTA 4 DESATURASE/C-4 HYDROXYLASE PROTEIN DES2"/>
    <property type="match status" value="1"/>
</dbReference>
<dbReference type="PANTHER" id="PTHR12879:SF21">
    <property type="entry name" value="SPHINGOLIPID DELTA(4)-DESATURASE_C4-MONOOXYGENASE DES2"/>
    <property type="match status" value="1"/>
</dbReference>
<dbReference type="Pfam" id="PF00487">
    <property type="entry name" value="FA_desaturase"/>
    <property type="match status" value="1"/>
</dbReference>
<dbReference type="Pfam" id="PF08557">
    <property type="entry name" value="Lipid_DES"/>
    <property type="match status" value="1"/>
</dbReference>
<dbReference type="PIRSF" id="PIRSF017228">
    <property type="entry name" value="Sphnglp_dlt4_des"/>
    <property type="match status" value="1"/>
</dbReference>
<dbReference type="SMART" id="SM01269">
    <property type="entry name" value="Lipid_DES"/>
    <property type="match status" value="1"/>
</dbReference>
<name>DEGS2_RAT</name>
<keyword id="KW-0256">Endoplasmic reticulum</keyword>
<keyword id="KW-0444">Lipid biosynthesis</keyword>
<keyword id="KW-0443">Lipid metabolism</keyword>
<keyword id="KW-0449">Lipoprotein</keyword>
<keyword id="KW-0472">Membrane</keyword>
<keyword id="KW-0519">Myristate</keyword>
<keyword id="KW-0560">Oxidoreductase</keyword>
<keyword id="KW-1185">Reference proteome</keyword>
<keyword id="KW-0812">Transmembrane</keyword>
<keyword id="KW-1133">Transmembrane helix</keyword>
<sequence>MGNSAARSDFEWVYSDQPHTQRRKEMLAKYPSIKALMRPDPNIKWTVLGMVLVQVLACWLVRGLSWRWLLFWAYAFGGCINHSLTLAIHDISHNTAFGTRCASRNRWFAVFANLPIGLPYATSFKKYHVDHHRYLGGDGLDVDIPTDFEGWFFCTPARKLLWLVLQPFFYSLRPLYVNPKAVTRMEILNALVQLAFNVTIFALWGIKAIVYLLASSLLGLGLHPISGHFVAEHYMFLKGHETYSYYGPLNWITFNVGYHVEHHDFPSIPGCYLPLVRMIAPEYYDHLPQHHSWVKVLWDFVFEDSLGPYSRVKRKCKLAKDQL</sequence>
<gene>
    <name evidence="6" type="primary">Degs2</name>
    <name evidence="7" type="synonym">Des2</name>
</gene>